<protein>
    <recommendedName>
        <fullName>D-inositol 3-phosphate glycosyltransferase</fullName>
        <ecNumber evidence="1">2.4.1.250</ecNumber>
    </recommendedName>
    <alternativeName>
        <fullName evidence="1">N-acetylglucosamine-inositol-phosphate N-acetylglucosaminyltransferase</fullName>
        <shortName evidence="1">GlcNAc-Ins-P N-acetylglucosaminyltransferase</shortName>
    </alternativeName>
</protein>
<proteinExistence type="evidence at transcript level"/>
<dbReference type="EC" id="2.4.1.250" evidence="1"/>
<dbReference type="EMBL" id="AL939119">
    <property type="protein sequence ID" value="CAC04040.1"/>
    <property type="status" value="ALT_INIT"/>
    <property type="molecule type" value="Genomic_DNA"/>
</dbReference>
<dbReference type="RefSeq" id="NP_628379.1">
    <property type="nucleotide sequence ID" value="NC_003888.3"/>
</dbReference>
<dbReference type="RefSeq" id="WP_016326818.1">
    <property type="nucleotide sequence ID" value="NZ_VNID01000031.1"/>
</dbReference>
<dbReference type="SMR" id="Q9FCG5"/>
<dbReference type="FunCoup" id="Q9FCG5">
    <property type="interactions" value="46"/>
</dbReference>
<dbReference type="STRING" id="100226.gene:17761848"/>
<dbReference type="CAZy" id="GT4">
    <property type="family name" value="Glycosyltransferase Family 4"/>
</dbReference>
<dbReference type="PaxDb" id="100226-SCO4204"/>
<dbReference type="GeneID" id="91384833"/>
<dbReference type="KEGG" id="sco:SCO4204"/>
<dbReference type="PATRIC" id="fig|100226.15.peg.4268"/>
<dbReference type="eggNOG" id="COG0438">
    <property type="taxonomic scope" value="Bacteria"/>
</dbReference>
<dbReference type="HOGENOM" id="CLU_009583_2_3_11"/>
<dbReference type="InParanoid" id="Q9FCG5"/>
<dbReference type="OrthoDB" id="9810929at2"/>
<dbReference type="Proteomes" id="UP000001973">
    <property type="component" value="Chromosome"/>
</dbReference>
<dbReference type="GO" id="GO:0008375">
    <property type="term" value="F:acetylglucosaminyltransferase activity"/>
    <property type="evidence" value="ECO:0007669"/>
    <property type="project" value="UniProtKB-UniRule"/>
</dbReference>
<dbReference type="GO" id="GO:0102710">
    <property type="term" value="F:D-inositol-3-phosphate glycosyltransferase activity"/>
    <property type="evidence" value="ECO:0007669"/>
    <property type="project" value="UniProtKB-EC"/>
</dbReference>
<dbReference type="GO" id="GO:0016757">
    <property type="term" value="F:glycosyltransferase activity"/>
    <property type="evidence" value="ECO:0000318"/>
    <property type="project" value="GO_Central"/>
</dbReference>
<dbReference type="GO" id="GO:0000287">
    <property type="term" value="F:magnesium ion binding"/>
    <property type="evidence" value="ECO:0007669"/>
    <property type="project" value="UniProtKB-UniRule"/>
</dbReference>
<dbReference type="GO" id="GO:0010125">
    <property type="term" value="P:mycothiol biosynthetic process"/>
    <property type="evidence" value="ECO:0007669"/>
    <property type="project" value="UniProtKB-UniRule"/>
</dbReference>
<dbReference type="CDD" id="cd03800">
    <property type="entry name" value="GT4_sucrose_synthase"/>
    <property type="match status" value="1"/>
</dbReference>
<dbReference type="Gene3D" id="3.40.50.2000">
    <property type="entry name" value="Glycogen Phosphorylase B"/>
    <property type="match status" value="2"/>
</dbReference>
<dbReference type="HAMAP" id="MF_01695">
    <property type="entry name" value="MshA"/>
    <property type="match status" value="1"/>
</dbReference>
<dbReference type="InterPro" id="IPR001296">
    <property type="entry name" value="Glyco_trans_1"/>
</dbReference>
<dbReference type="InterPro" id="IPR028098">
    <property type="entry name" value="Glyco_trans_4-like_N"/>
</dbReference>
<dbReference type="InterPro" id="IPR017814">
    <property type="entry name" value="Mycothiol_biosynthesis_MshA"/>
</dbReference>
<dbReference type="NCBIfam" id="TIGR03449">
    <property type="entry name" value="mycothiol_MshA"/>
    <property type="match status" value="1"/>
</dbReference>
<dbReference type="PANTHER" id="PTHR12526:SF510">
    <property type="entry name" value="D-INOSITOL 3-PHOSPHATE GLYCOSYLTRANSFERASE"/>
    <property type="match status" value="1"/>
</dbReference>
<dbReference type="PANTHER" id="PTHR12526">
    <property type="entry name" value="GLYCOSYLTRANSFERASE"/>
    <property type="match status" value="1"/>
</dbReference>
<dbReference type="Pfam" id="PF13579">
    <property type="entry name" value="Glyco_trans_4_4"/>
    <property type="match status" value="1"/>
</dbReference>
<dbReference type="Pfam" id="PF00534">
    <property type="entry name" value="Glycos_transf_1"/>
    <property type="match status" value="1"/>
</dbReference>
<dbReference type="SUPFAM" id="SSF53756">
    <property type="entry name" value="UDP-Glycosyltransferase/glycogen phosphorylase"/>
    <property type="match status" value="1"/>
</dbReference>
<evidence type="ECO:0000255" key="1">
    <source>
        <dbReference type="HAMAP-Rule" id="MF_01695"/>
    </source>
</evidence>
<evidence type="ECO:0000269" key="2">
    <source>
    </source>
</evidence>
<evidence type="ECO:0000305" key="3"/>
<accession>Q9FCG5</accession>
<gene>
    <name evidence="1" type="primary">mshA</name>
    <name type="ordered locus">SCO4204</name>
    <name type="ORF">2SCD46.18</name>
</gene>
<feature type="chain" id="PRO_0000400162" description="D-inositol 3-phosphate glycosyltransferase">
    <location>
        <begin position="1"/>
        <end position="457"/>
    </location>
</feature>
<feature type="binding site" evidence="1">
    <location>
        <position position="34"/>
    </location>
    <ligand>
        <name>1D-myo-inositol 3-phosphate</name>
        <dbReference type="ChEBI" id="CHEBI:58401"/>
    </ligand>
</feature>
<feature type="binding site" evidence="1">
    <location>
        <begin position="40"/>
        <end position="41"/>
    </location>
    <ligand>
        <name>UDP-N-acetyl-alpha-D-glucosamine</name>
        <dbReference type="ChEBI" id="CHEBI:57705"/>
    </ligand>
</feature>
<feature type="binding site" evidence="1">
    <location>
        <begin position="45"/>
        <end position="50"/>
    </location>
    <ligand>
        <name>1D-myo-inositol 3-phosphate</name>
        <dbReference type="ChEBI" id="CHEBI:58401"/>
    </ligand>
</feature>
<feature type="binding site" evidence="1">
    <location>
        <position position="48"/>
    </location>
    <ligand>
        <name>UDP-N-acetyl-alpha-D-glucosamine</name>
        <dbReference type="ChEBI" id="CHEBI:57705"/>
    </ligand>
</feature>
<feature type="binding site" evidence="1">
    <location>
        <position position="103"/>
    </location>
    <ligand>
        <name>1D-myo-inositol 3-phosphate</name>
        <dbReference type="ChEBI" id="CHEBI:58401"/>
    </ligand>
</feature>
<feature type="binding site" evidence="1">
    <location>
        <position position="136"/>
    </location>
    <ligand>
        <name>1D-myo-inositol 3-phosphate</name>
        <dbReference type="ChEBI" id="CHEBI:58401"/>
    </ligand>
</feature>
<feature type="binding site" evidence="1">
    <location>
        <position position="160"/>
    </location>
    <ligand>
        <name>1D-myo-inositol 3-phosphate</name>
        <dbReference type="ChEBI" id="CHEBI:58401"/>
    </ligand>
</feature>
<feature type="binding site" evidence="1">
    <location>
        <position position="180"/>
    </location>
    <ligand>
        <name>1D-myo-inositol 3-phosphate</name>
        <dbReference type="ChEBI" id="CHEBI:58401"/>
    </ligand>
</feature>
<feature type="binding site" evidence="1">
    <location>
        <position position="267"/>
    </location>
    <ligand>
        <name>UDP-N-acetyl-alpha-D-glucosamine</name>
        <dbReference type="ChEBI" id="CHEBI:57705"/>
    </ligand>
</feature>
<feature type="binding site" evidence="1">
    <location>
        <position position="272"/>
    </location>
    <ligand>
        <name>UDP-N-acetyl-alpha-D-glucosamine</name>
        <dbReference type="ChEBI" id="CHEBI:57705"/>
    </ligand>
</feature>
<feature type="binding site" evidence="1">
    <location>
        <position position="333"/>
    </location>
    <ligand>
        <name>UDP-N-acetyl-alpha-D-glucosamine</name>
        <dbReference type="ChEBI" id="CHEBI:57705"/>
    </ligand>
</feature>
<feature type="binding site" evidence="1">
    <location>
        <position position="342"/>
    </location>
    <ligand>
        <name>Mg(2+)</name>
        <dbReference type="ChEBI" id="CHEBI:18420"/>
    </ligand>
</feature>
<feature type="binding site" evidence="1">
    <location>
        <position position="343"/>
    </location>
    <ligand>
        <name>Mg(2+)</name>
        <dbReference type="ChEBI" id="CHEBI:18420"/>
    </ligand>
</feature>
<feature type="binding site" evidence="1">
    <location>
        <position position="345"/>
    </location>
    <ligand>
        <name>Mg(2+)</name>
        <dbReference type="ChEBI" id="CHEBI:18420"/>
    </ligand>
</feature>
<feature type="binding site" evidence="1">
    <location>
        <position position="355"/>
    </location>
    <ligand>
        <name>UDP-N-acetyl-alpha-D-glucosamine</name>
        <dbReference type="ChEBI" id="CHEBI:57705"/>
    </ligand>
</feature>
<feature type="binding site" evidence="1">
    <location>
        <position position="363"/>
    </location>
    <ligand>
        <name>UDP-N-acetyl-alpha-D-glucosamine</name>
        <dbReference type="ChEBI" id="CHEBI:57705"/>
    </ligand>
</feature>
<feature type="binding site" evidence="1">
    <location>
        <position position="369"/>
    </location>
    <ligand>
        <name>Mg(2+)</name>
        <dbReference type="ChEBI" id="CHEBI:18420"/>
    </ligand>
</feature>
<name>MSHA_STRCO</name>
<sequence>MSQYVSRLGRRSPAASPRLRLNRKPRRVAMLSVHTSPLHQPGTGDAGGMNVYIVELAQRLAAINIEVEIFTRATTAALPPAVELAPGVLVRHVDAGPYEGLAKEELPAQLCAFTHGVMQAWAGHRPGHYDLVHSHYWLSGHVGWLAAQRWGAPLVHAMHTMAKVKNANLADGDTPEPAARVIGETQIVAASDRLIANTAEEADELVRHYAADPDKVAVVHPGVNLERFRPFPKGRVPGPGQHGNARAAARARLGLPQDALIPLFAGRIQPLKAPDILLRAVAVLLDERPELRSRIVVPVVGGPSGSGLAKPEGLQKLAARLGIADVVRFRPPVGQEQLADWFRAASVLVMPSYSESFGLVAIEAQAAGTPVLAAAVGGLPVAVRDGHTGRLVHGHDPAAYARVLRDFADNPDLTPRMGDAAARHAQSFGWDSAAATTADVYTAAIQSYRRRVRSHHG</sequence>
<reference key="1">
    <citation type="journal article" date="2002" name="Nature">
        <title>Complete genome sequence of the model actinomycete Streptomyces coelicolor A3(2).</title>
        <authorList>
            <person name="Bentley S.D."/>
            <person name="Chater K.F."/>
            <person name="Cerdeno-Tarraga A.-M."/>
            <person name="Challis G.L."/>
            <person name="Thomson N.R."/>
            <person name="James K.D."/>
            <person name="Harris D.E."/>
            <person name="Quail M.A."/>
            <person name="Kieser H."/>
            <person name="Harper D."/>
            <person name="Bateman A."/>
            <person name="Brown S."/>
            <person name="Chandra G."/>
            <person name="Chen C.W."/>
            <person name="Collins M."/>
            <person name="Cronin A."/>
            <person name="Fraser A."/>
            <person name="Goble A."/>
            <person name="Hidalgo J."/>
            <person name="Hornsby T."/>
            <person name="Howarth S."/>
            <person name="Huang C.-H."/>
            <person name="Kieser T."/>
            <person name="Larke L."/>
            <person name="Murphy L.D."/>
            <person name="Oliver K."/>
            <person name="O'Neil S."/>
            <person name="Rabbinowitsch E."/>
            <person name="Rajandream M.A."/>
            <person name="Rutherford K.M."/>
            <person name="Rutter S."/>
            <person name="Seeger K."/>
            <person name="Saunders D."/>
            <person name="Sharp S."/>
            <person name="Squares R."/>
            <person name="Squares S."/>
            <person name="Taylor K."/>
            <person name="Warren T."/>
            <person name="Wietzorrek A."/>
            <person name="Woodward J.R."/>
            <person name="Barrell B.G."/>
            <person name="Parkhill J."/>
            <person name="Hopwood D.A."/>
        </authorList>
    </citation>
    <scope>NUCLEOTIDE SEQUENCE [LARGE SCALE GENOMIC DNA]</scope>
    <source>
        <strain>ATCC BAA-471 / A3(2) / M145</strain>
    </source>
</reference>
<reference key="2">
    <citation type="journal article" date="2008" name="Mol. Microbiol.">
        <title>Mycothiol regulates and is regulated by a thiol-specific antisigma factor RsrA and sigma(R) in Streptomyces coelicolor.</title>
        <authorList>
            <person name="Park J.H."/>
            <person name="Roe J.H."/>
        </authorList>
    </citation>
    <scope>INDUCTION</scope>
    <scope>PROBABLE START SITE</scope>
    <source>
        <strain>ATCC BAA-471 / A3(2) / M145</strain>
    </source>
</reference>
<comment type="function">
    <text evidence="1">Catalyzes the transfer of a N-acetyl-glucosamine moiety to 1D-myo-inositol 3-phosphate to produce 1D-myo-inositol 2-acetamido-2-deoxy-glucopyranoside 3-phosphate in the mycothiol biosynthesis pathway.</text>
</comment>
<comment type="catalytic activity">
    <reaction evidence="1">
        <text>1D-myo-inositol 3-phosphate + UDP-N-acetyl-alpha-D-glucosamine = 1D-myo-inositol 2-acetamido-2-deoxy-alpha-D-glucopyranoside 3-phosphate + UDP + H(+)</text>
        <dbReference type="Rhea" id="RHEA:26188"/>
        <dbReference type="ChEBI" id="CHEBI:15378"/>
        <dbReference type="ChEBI" id="CHEBI:57705"/>
        <dbReference type="ChEBI" id="CHEBI:58223"/>
        <dbReference type="ChEBI" id="CHEBI:58401"/>
        <dbReference type="ChEBI" id="CHEBI:58892"/>
        <dbReference type="EC" id="2.4.1.250"/>
    </reaction>
</comment>
<comment type="subunit">
    <text evidence="1">Homodimer.</text>
</comment>
<comment type="induction">
    <text evidence="2">Transiently induced by thiol-oxidant diamide, under control of SigR. Also induced when mycothiol is oxidized or conjugated.</text>
</comment>
<comment type="similarity">
    <text evidence="1">Belongs to the glycosyltransferase group 1 family. MshA subfamily.</text>
</comment>
<comment type="sequence caution" evidence="3">
    <conflict type="erroneous initiation">
        <sequence resource="EMBL-CDS" id="CAC04040"/>
    </conflict>
    <text>Extended N-terminus.</text>
</comment>
<keyword id="KW-0328">Glycosyltransferase</keyword>
<keyword id="KW-0460">Magnesium</keyword>
<keyword id="KW-0479">Metal-binding</keyword>
<keyword id="KW-1185">Reference proteome</keyword>
<keyword id="KW-0808">Transferase</keyword>
<organism>
    <name type="scientific">Streptomyces coelicolor (strain ATCC BAA-471 / A3(2) / M145)</name>
    <dbReference type="NCBI Taxonomy" id="100226"/>
    <lineage>
        <taxon>Bacteria</taxon>
        <taxon>Bacillati</taxon>
        <taxon>Actinomycetota</taxon>
        <taxon>Actinomycetes</taxon>
        <taxon>Kitasatosporales</taxon>
        <taxon>Streptomycetaceae</taxon>
        <taxon>Streptomyces</taxon>
        <taxon>Streptomyces albidoflavus group</taxon>
    </lineage>
</organism>